<feature type="chain" id="PRO_0000389207" description="von Willebrand factor A domain-containing protein DDB_G0292016">
    <location>
        <begin position="1"/>
        <end position="918"/>
    </location>
</feature>
<feature type="domain" description="VIT" evidence="2">
    <location>
        <begin position="44"/>
        <end position="172"/>
    </location>
</feature>
<feature type="domain" description="VWFA" evidence="1">
    <location>
        <begin position="299"/>
        <end position="467"/>
    </location>
</feature>
<feature type="region of interest" description="Disordered" evidence="3">
    <location>
        <begin position="625"/>
        <end position="814"/>
    </location>
</feature>
<feature type="compositionally biased region" description="Low complexity" evidence="3">
    <location>
        <begin position="650"/>
        <end position="690"/>
    </location>
</feature>
<feature type="compositionally biased region" description="Acidic residues" evidence="3">
    <location>
        <begin position="716"/>
        <end position="746"/>
    </location>
</feature>
<feature type="compositionally biased region" description="Basic and acidic residues" evidence="3">
    <location>
        <begin position="752"/>
        <end position="774"/>
    </location>
</feature>
<feature type="compositionally biased region" description="Low complexity" evidence="3">
    <location>
        <begin position="777"/>
        <end position="814"/>
    </location>
</feature>
<name>Y2016_DICDI</name>
<sequence>MFSSITSKLSAISGGSSKNDYKEANYYNYFRILEKKQTEEIARKRCGLYSLKNHNNVFVLKEFSIETEINDCSSTSIWTQSYSNDSNTPVEAKYQLPLHPTSVVSNFQIEYQGKVIQGKIKEKEKALEKYNDAIASGGQAFMATKSDDGYFNLTLGNLPPKENVKVRVVISSELGTHTDGQLHYCLHRYMFPSYAFNFNYNVVLKFSIPIKSIDCDGFDVNVNYKENSSKKEAKITSKSQHTSGVKKNIILIIQPVELNEPKSMIEYIGGGDDKSYATAINFYPSFKNVNPDEVYQKSEFIFLIDCSGSMSGQSINKARRAMEIIIRSLNEQHKVNIYCFGSSFNKVFDKSRVYNDETLEIAGSFVEKISANLGGTELLPPMVDILSSPNDPEYPRQVFILTDGEISERDKLIDYVAKEANTTRIFTYGIGASVDQELVIGLSKACKGYYEMIKETTNMEKQVMKLLNVAFEPMLSNIKLDWSSCGLVDVIQAPSHIRPLFNQERMMIYSMIPSNQTNQDIINASIETSKPLIITLTGDGPKGNVLSFPITLDFKNDLSTNSNQIHTLAAFKHIQDLEESERKEKKDNKDKIVELGKKYGLVSKHTSYIVTADSDNVTEETMKTVDIMNQSPPIRPGGRIVSRGGGRSGASGALSSSILSRKRSSSPSTATKRSSSSSFSSSYLSLSSSSQKKKKEVSRSDDDDDDEKIENCVESYESDGGDQSSEQDEEEEDDCDDFHEDLDEDLGATAMDVDKKECEKECKKKDSSKVDLKVKPSKVPLPSRSPSVSKPTTTSLLSPSPKSAPSAPSQQKSVKSTGDLLIDLLKIQKSNGSWTKSSIDQLKIPTDKAPAELSTTELNDIWVTIIVIAKIVKFFSSEKAQYELAIQKSTRWVKLQLSKLNLPENTFDKFLSNAKSLV</sequence>
<protein>
    <recommendedName>
        <fullName>von Willebrand factor A domain-containing protein DDB_G0292016</fullName>
    </recommendedName>
</protein>
<proteinExistence type="predicted"/>
<gene>
    <name type="ORF">DDB_G0292016</name>
</gene>
<evidence type="ECO:0000255" key="1">
    <source>
        <dbReference type="PROSITE-ProRule" id="PRU00219"/>
    </source>
</evidence>
<evidence type="ECO:0000255" key="2">
    <source>
        <dbReference type="PROSITE-ProRule" id="PRU00801"/>
    </source>
</evidence>
<evidence type="ECO:0000256" key="3">
    <source>
        <dbReference type="SAM" id="MobiDB-lite"/>
    </source>
</evidence>
<keyword id="KW-1185">Reference proteome</keyword>
<accession>Q54DV3</accession>
<reference key="1">
    <citation type="journal article" date="2005" name="Nature">
        <title>The genome of the social amoeba Dictyostelium discoideum.</title>
        <authorList>
            <person name="Eichinger L."/>
            <person name="Pachebat J.A."/>
            <person name="Gloeckner G."/>
            <person name="Rajandream M.A."/>
            <person name="Sucgang R."/>
            <person name="Berriman M."/>
            <person name="Song J."/>
            <person name="Olsen R."/>
            <person name="Szafranski K."/>
            <person name="Xu Q."/>
            <person name="Tunggal B."/>
            <person name="Kummerfeld S."/>
            <person name="Madera M."/>
            <person name="Konfortov B.A."/>
            <person name="Rivero F."/>
            <person name="Bankier A.T."/>
            <person name="Lehmann R."/>
            <person name="Hamlin N."/>
            <person name="Davies R."/>
            <person name="Gaudet P."/>
            <person name="Fey P."/>
            <person name="Pilcher K."/>
            <person name="Chen G."/>
            <person name="Saunders D."/>
            <person name="Sodergren E.J."/>
            <person name="Davis P."/>
            <person name="Kerhornou A."/>
            <person name="Nie X."/>
            <person name="Hall N."/>
            <person name="Anjard C."/>
            <person name="Hemphill L."/>
            <person name="Bason N."/>
            <person name="Farbrother P."/>
            <person name="Desany B."/>
            <person name="Just E."/>
            <person name="Morio T."/>
            <person name="Rost R."/>
            <person name="Churcher C.M."/>
            <person name="Cooper J."/>
            <person name="Haydock S."/>
            <person name="van Driessche N."/>
            <person name="Cronin A."/>
            <person name="Goodhead I."/>
            <person name="Muzny D.M."/>
            <person name="Mourier T."/>
            <person name="Pain A."/>
            <person name="Lu M."/>
            <person name="Harper D."/>
            <person name="Lindsay R."/>
            <person name="Hauser H."/>
            <person name="James K.D."/>
            <person name="Quiles M."/>
            <person name="Madan Babu M."/>
            <person name="Saito T."/>
            <person name="Buchrieser C."/>
            <person name="Wardroper A."/>
            <person name="Felder M."/>
            <person name="Thangavelu M."/>
            <person name="Johnson D."/>
            <person name="Knights A."/>
            <person name="Loulseged H."/>
            <person name="Mungall K.L."/>
            <person name="Oliver K."/>
            <person name="Price C."/>
            <person name="Quail M.A."/>
            <person name="Urushihara H."/>
            <person name="Hernandez J."/>
            <person name="Rabbinowitsch E."/>
            <person name="Steffen D."/>
            <person name="Sanders M."/>
            <person name="Ma J."/>
            <person name="Kohara Y."/>
            <person name="Sharp S."/>
            <person name="Simmonds M.N."/>
            <person name="Spiegler S."/>
            <person name="Tivey A."/>
            <person name="Sugano S."/>
            <person name="White B."/>
            <person name="Walker D."/>
            <person name="Woodward J.R."/>
            <person name="Winckler T."/>
            <person name="Tanaka Y."/>
            <person name="Shaulsky G."/>
            <person name="Schleicher M."/>
            <person name="Weinstock G.M."/>
            <person name="Rosenthal A."/>
            <person name="Cox E.C."/>
            <person name="Chisholm R.L."/>
            <person name="Gibbs R.A."/>
            <person name="Loomis W.F."/>
            <person name="Platzer M."/>
            <person name="Kay R.R."/>
            <person name="Williams J.G."/>
            <person name="Dear P.H."/>
            <person name="Noegel A.A."/>
            <person name="Barrell B.G."/>
            <person name="Kuspa A."/>
        </authorList>
    </citation>
    <scope>NUCLEOTIDE SEQUENCE [LARGE SCALE GENOMIC DNA]</scope>
    <source>
        <strain>AX4</strain>
    </source>
</reference>
<dbReference type="EMBL" id="AAFI02000187">
    <property type="protein sequence ID" value="EAL61364.1"/>
    <property type="molecule type" value="Genomic_DNA"/>
</dbReference>
<dbReference type="RefSeq" id="XP_629769.1">
    <property type="nucleotide sequence ID" value="XM_629767.1"/>
</dbReference>
<dbReference type="SMR" id="Q54DV3"/>
<dbReference type="FunCoup" id="Q54DV3">
    <property type="interactions" value="6"/>
</dbReference>
<dbReference type="STRING" id="44689.Q54DV3"/>
<dbReference type="PaxDb" id="44689-DDB0184163"/>
<dbReference type="EnsemblProtists" id="EAL61364">
    <property type="protein sequence ID" value="EAL61364"/>
    <property type="gene ID" value="DDB_G0292016"/>
</dbReference>
<dbReference type="GeneID" id="8628445"/>
<dbReference type="KEGG" id="ddi:DDB_G0292016"/>
<dbReference type="dictyBase" id="DDB_G0292016"/>
<dbReference type="VEuPathDB" id="AmoebaDB:DDB_G0292016"/>
<dbReference type="eggNOG" id="ENOG502QRPK">
    <property type="taxonomic scope" value="Eukaryota"/>
</dbReference>
<dbReference type="HOGENOM" id="CLU_327738_0_0_1"/>
<dbReference type="InParanoid" id="Q54DV3"/>
<dbReference type="OMA" id="TPNENMS"/>
<dbReference type="PhylomeDB" id="Q54DV3"/>
<dbReference type="PRO" id="PR:Q54DV3"/>
<dbReference type="Proteomes" id="UP000002195">
    <property type="component" value="Chromosome 6"/>
</dbReference>
<dbReference type="Gene3D" id="3.40.50.410">
    <property type="entry name" value="von Willebrand factor, type A domain"/>
    <property type="match status" value="1"/>
</dbReference>
<dbReference type="InterPro" id="IPR013694">
    <property type="entry name" value="VIT"/>
</dbReference>
<dbReference type="InterPro" id="IPR002035">
    <property type="entry name" value="VWF_A"/>
</dbReference>
<dbReference type="InterPro" id="IPR036465">
    <property type="entry name" value="vWFA_dom_sf"/>
</dbReference>
<dbReference type="PANTHER" id="PTHR45737">
    <property type="entry name" value="VON WILLEBRAND FACTOR A DOMAIN-CONTAINING PROTEIN 5A"/>
    <property type="match status" value="1"/>
</dbReference>
<dbReference type="PANTHER" id="PTHR45737:SF1">
    <property type="entry name" value="VON WILLEBRAND FACTOR A DOMAIN-CONTAINING PROTEIN DDB_G0267758-RELATED"/>
    <property type="match status" value="1"/>
</dbReference>
<dbReference type="Pfam" id="PF08487">
    <property type="entry name" value="VIT"/>
    <property type="match status" value="1"/>
</dbReference>
<dbReference type="Pfam" id="PF13768">
    <property type="entry name" value="VWA_3"/>
    <property type="match status" value="1"/>
</dbReference>
<dbReference type="SMART" id="SM00609">
    <property type="entry name" value="VIT"/>
    <property type="match status" value="1"/>
</dbReference>
<dbReference type="SMART" id="SM00327">
    <property type="entry name" value="VWA"/>
    <property type="match status" value="1"/>
</dbReference>
<dbReference type="SUPFAM" id="SSF53300">
    <property type="entry name" value="vWA-like"/>
    <property type="match status" value="1"/>
</dbReference>
<dbReference type="PROSITE" id="PS51468">
    <property type="entry name" value="VIT"/>
    <property type="match status" value="1"/>
</dbReference>
<dbReference type="PROSITE" id="PS50234">
    <property type="entry name" value="VWFA"/>
    <property type="match status" value="1"/>
</dbReference>
<organism>
    <name type="scientific">Dictyostelium discoideum</name>
    <name type="common">Social amoeba</name>
    <dbReference type="NCBI Taxonomy" id="44689"/>
    <lineage>
        <taxon>Eukaryota</taxon>
        <taxon>Amoebozoa</taxon>
        <taxon>Evosea</taxon>
        <taxon>Eumycetozoa</taxon>
        <taxon>Dictyostelia</taxon>
        <taxon>Dictyosteliales</taxon>
        <taxon>Dictyosteliaceae</taxon>
        <taxon>Dictyostelium</taxon>
    </lineage>
</organism>